<comment type="subcellular location">
    <subcellularLocation>
        <location evidence="1">Cell inner membrane</location>
        <topology evidence="1">Multi-pass membrane protein</topology>
    </subcellularLocation>
</comment>
<comment type="similarity">
    <text evidence="1">Belongs to the major facilitator superfamily. DHA1 family. MdtH (TC 2.A.1.2.21) subfamily.</text>
</comment>
<reference key="1">
    <citation type="journal article" date="2006" name="Genome Res.">
        <title>Massive genome erosion and functional adaptations provide insights into the symbiotic lifestyle of Sodalis glossinidius in the tsetse host.</title>
        <authorList>
            <person name="Toh H."/>
            <person name="Weiss B.L."/>
            <person name="Perkin S.A.H."/>
            <person name="Yamashita A."/>
            <person name="Oshima K."/>
            <person name="Hattori M."/>
            <person name="Aksoy S."/>
        </authorList>
    </citation>
    <scope>NUCLEOTIDE SEQUENCE [LARGE SCALE GENOMIC DNA]</scope>
    <source>
        <strain>morsitans</strain>
    </source>
</reference>
<proteinExistence type="inferred from homology"/>
<evidence type="ECO:0000255" key="1">
    <source>
        <dbReference type="HAMAP-Rule" id="MF_01529"/>
    </source>
</evidence>
<gene>
    <name evidence="1" type="primary">mdtH</name>
    <name type="ordered locus">SG1245</name>
</gene>
<keyword id="KW-0997">Cell inner membrane</keyword>
<keyword id="KW-1003">Cell membrane</keyword>
<keyword id="KW-0472">Membrane</keyword>
<keyword id="KW-0812">Transmembrane</keyword>
<keyword id="KW-1133">Transmembrane helix</keyword>
<keyword id="KW-0813">Transport</keyword>
<dbReference type="EMBL" id="AP008232">
    <property type="protein sequence ID" value="BAE74520.1"/>
    <property type="molecule type" value="Genomic_DNA"/>
</dbReference>
<dbReference type="RefSeq" id="WP_011411074.1">
    <property type="nucleotide sequence ID" value="NC_007712.1"/>
</dbReference>
<dbReference type="SMR" id="Q2NTK5"/>
<dbReference type="STRING" id="343509.SG1245"/>
<dbReference type="KEGG" id="sgl:SG1245"/>
<dbReference type="eggNOG" id="COG0477">
    <property type="taxonomic scope" value="Bacteria"/>
</dbReference>
<dbReference type="HOGENOM" id="CLU_001265_60_2_6"/>
<dbReference type="OrthoDB" id="56516at2"/>
<dbReference type="BioCyc" id="SGLO343509:SGP1_RS11140-MONOMER"/>
<dbReference type="Proteomes" id="UP000001932">
    <property type="component" value="Chromosome"/>
</dbReference>
<dbReference type="GO" id="GO:0005886">
    <property type="term" value="C:plasma membrane"/>
    <property type="evidence" value="ECO:0007669"/>
    <property type="project" value="UniProtKB-SubCell"/>
</dbReference>
<dbReference type="GO" id="GO:0022857">
    <property type="term" value="F:transmembrane transporter activity"/>
    <property type="evidence" value="ECO:0007669"/>
    <property type="project" value="UniProtKB-UniRule"/>
</dbReference>
<dbReference type="CDD" id="cd17329">
    <property type="entry name" value="MFS_MdtH_MDR_like"/>
    <property type="match status" value="1"/>
</dbReference>
<dbReference type="Gene3D" id="1.20.1250.20">
    <property type="entry name" value="MFS general substrate transporter like domains"/>
    <property type="match status" value="1"/>
</dbReference>
<dbReference type="HAMAP" id="MF_01529">
    <property type="entry name" value="MFS_MdtH"/>
    <property type="match status" value="1"/>
</dbReference>
<dbReference type="InterPro" id="IPR011701">
    <property type="entry name" value="MFS"/>
</dbReference>
<dbReference type="InterPro" id="IPR020846">
    <property type="entry name" value="MFS_dom"/>
</dbReference>
<dbReference type="InterPro" id="IPR036259">
    <property type="entry name" value="MFS_trans_sf"/>
</dbReference>
<dbReference type="InterPro" id="IPR050171">
    <property type="entry name" value="MFS_Transporters"/>
</dbReference>
<dbReference type="InterPro" id="IPR022855">
    <property type="entry name" value="Multidrug-R_MdtH"/>
</dbReference>
<dbReference type="NCBIfam" id="NF008650">
    <property type="entry name" value="PRK11646.1"/>
    <property type="match status" value="1"/>
</dbReference>
<dbReference type="PANTHER" id="PTHR23517:SF2">
    <property type="entry name" value="MULTIDRUG RESISTANCE PROTEIN MDTH"/>
    <property type="match status" value="1"/>
</dbReference>
<dbReference type="PANTHER" id="PTHR23517">
    <property type="entry name" value="RESISTANCE PROTEIN MDTM, PUTATIVE-RELATED-RELATED"/>
    <property type="match status" value="1"/>
</dbReference>
<dbReference type="Pfam" id="PF07690">
    <property type="entry name" value="MFS_1"/>
    <property type="match status" value="1"/>
</dbReference>
<dbReference type="SUPFAM" id="SSF103473">
    <property type="entry name" value="MFS general substrate transporter"/>
    <property type="match status" value="1"/>
</dbReference>
<dbReference type="PROSITE" id="PS50850">
    <property type="entry name" value="MFS"/>
    <property type="match status" value="1"/>
</dbReference>
<accession>Q2NTK5</accession>
<protein>
    <recommendedName>
        <fullName evidence="1">Multidrug resistance protein MdtH</fullName>
    </recommendedName>
</protein>
<sequence>MSSVSQARSLGKYFLLMDNMLVVMGFYVVFPLISIRFVDQLGWAALLVGIALGLRQFIQQGLGIFGGAFADRLGAKPMIIAGMLMRALGFVLMGIADEPWLLWLSCALSALGGTLFDPPRTALVIKLTRPWERGRFYSLLMMQDSACSVIGALLGSWLLRYDFKLVCLAGAVLFVFAAIFNAWLLPGYRISTVRAPMLEGMRRVLRDQRFVTYVLTLTGYYMLSVQVMLMLPIRINEVAGQPAAVKWMYAIEAALSLSLLYPIARWSEKRFRLETRLMAGLTVMLLSLFPIGLIEDLRALFMLIGLFYIGSIIAEPARETLGASLADNRARGSYMGFSRLGLALGGAIGYSGGGWLYDVGNRLEIPQLPWFMLGLIGFITLLGLYRQFQQRPIEPAMLNGRGEGS</sequence>
<name>MDTH_SODGM</name>
<feature type="chain" id="PRO_0000280503" description="Multidrug resistance protein MdtH">
    <location>
        <begin position="1"/>
        <end position="405"/>
    </location>
</feature>
<feature type="transmembrane region" description="Helical" evidence="1">
    <location>
        <begin position="13"/>
        <end position="33"/>
    </location>
</feature>
<feature type="transmembrane region" description="Helical" evidence="1">
    <location>
        <begin position="34"/>
        <end position="54"/>
    </location>
</feature>
<feature type="transmembrane region" description="Helical" evidence="1">
    <location>
        <begin position="78"/>
        <end position="95"/>
    </location>
</feature>
<feature type="transmembrane region" description="Helical" evidence="1">
    <location>
        <begin position="99"/>
        <end position="116"/>
    </location>
</feature>
<feature type="transmembrane region" description="Helical" evidence="1">
    <location>
        <begin position="139"/>
        <end position="159"/>
    </location>
</feature>
<feature type="transmembrane region" description="Helical" evidence="1">
    <location>
        <begin position="165"/>
        <end position="185"/>
    </location>
</feature>
<feature type="transmembrane region" description="Helical" evidence="1">
    <location>
        <begin position="213"/>
        <end position="233"/>
    </location>
</feature>
<feature type="transmembrane region" description="Helical" evidence="1">
    <location>
        <begin position="243"/>
        <end position="263"/>
    </location>
</feature>
<feature type="transmembrane region" description="Helical" evidence="1">
    <location>
        <begin position="277"/>
        <end position="297"/>
    </location>
</feature>
<feature type="transmembrane region" description="Helical" evidence="1">
    <location>
        <begin position="299"/>
        <end position="319"/>
    </location>
</feature>
<feature type="transmembrane region" description="Helical" evidence="1">
    <location>
        <begin position="340"/>
        <end position="360"/>
    </location>
</feature>
<feature type="transmembrane region" description="Helical" evidence="1">
    <location>
        <begin position="365"/>
        <end position="385"/>
    </location>
</feature>
<organism>
    <name type="scientific">Sodalis glossinidius (strain morsitans)</name>
    <dbReference type="NCBI Taxonomy" id="343509"/>
    <lineage>
        <taxon>Bacteria</taxon>
        <taxon>Pseudomonadati</taxon>
        <taxon>Pseudomonadota</taxon>
        <taxon>Gammaproteobacteria</taxon>
        <taxon>Enterobacterales</taxon>
        <taxon>Bruguierivoracaceae</taxon>
        <taxon>Sodalis</taxon>
    </lineage>
</organism>